<proteinExistence type="inferred from homology"/>
<sequence>MARIAGVNIPDHKHVVIALTAIYGIGKTTSLKLCKTVDIDPSVKVSQLSDAQLESLRTEIAKITVEGDLRRVVTMNIKRLMDLGCYRGLRHRRGLPLRGQRTKTNARTRKGRRKGTSS</sequence>
<dbReference type="EMBL" id="CR628336">
    <property type="protein sequence ID" value="CAH11564.1"/>
    <property type="molecule type" value="Genomic_DNA"/>
</dbReference>
<dbReference type="RefSeq" id="WP_010946100.1">
    <property type="nucleotide sequence ID" value="NC_006368.1"/>
</dbReference>
<dbReference type="SMR" id="Q5X837"/>
<dbReference type="GeneID" id="57034354"/>
<dbReference type="KEGG" id="lpp:lpp0416"/>
<dbReference type="LegioList" id="lpp0416"/>
<dbReference type="HOGENOM" id="CLU_103849_1_2_6"/>
<dbReference type="GO" id="GO:0005829">
    <property type="term" value="C:cytosol"/>
    <property type="evidence" value="ECO:0007669"/>
    <property type="project" value="TreeGrafter"/>
</dbReference>
<dbReference type="GO" id="GO:0015935">
    <property type="term" value="C:small ribosomal subunit"/>
    <property type="evidence" value="ECO:0007669"/>
    <property type="project" value="TreeGrafter"/>
</dbReference>
<dbReference type="GO" id="GO:0019843">
    <property type="term" value="F:rRNA binding"/>
    <property type="evidence" value="ECO:0007669"/>
    <property type="project" value="UniProtKB-UniRule"/>
</dbReference>
<dbReference type="GO" id="GO:0003735">
    <property type="term" value="F:structural constituent of ribosome"/>
    <property type="evidence" value="ECO:0007669"/>
    <property type="project" value="InterPro"/>
</dbReference>
<dbReference type="GO" id="GO:0000049">
    <property type="term" value="F:tRNA binding"/>
    <property type="evidence" value="ECO:0007669"/>
    <property type="project" value="UniProtKB-UniRule"/>
</dbReference>
<dbReference type="GO" id="GO:0006412">
    <property type="term" value="P:translation"/>
    <property type="evidence" value="ECO:0007669"/>
    <property type="project" value="UniProtKB-UniRule"/>
</dbReference>
<dbReference type="FunFam" id="1.10.8.50:FF:000001">
    <property type="entry name" value="30S ribosomal protein S13"/>
    <property type="match status" value="1"/>
</dbReference>
<dbReference type="FunFam" id="4.10.910.10:FF:000001">
    <property type="entry name" value="30S ribosomal protein S13"/>
    <property type="match status" value="1"/>
</dbReference>
<dbReference type="Gene3D" id="1.10.8.50">
    <property type="match status" value="1"/>
</dbReference>
<dbReference type="Gene3D" id="4.10.910.10">
    <property type="entry name" value="30s ribosomal protein s13, domain 2"/>
    <property type="match status" value="1"/>
</dbReference>
<dbReference type="HAMAP" id="MF_01315">
    <property type="entry name" value="Ribosomal_uS13"/>
    <property type="match status" value="1"/>
</dbReference>
<dbReference type="InterPro" id="IPR027437">
    <property type="entry name" value="Rbsml_uS13_C"/>
</dbReference>
<dbReference type="InterPro" id="IPR001892">
    <property type="entry name" value="Ribosomal_uS13"/>
</dbReference>
<dbReference type="InterPro" id="IPR010979">
    <property type="entry name" value="Ribosomal_uS13-like_H2TH"/>
</dbReference>
<dbReference type="InterPro" id="IPR019980">
    <property type="entry name" value="Ribosomal_uS13_bac-type"/>
</dbReference>
<dbReference type="InterPro" id="IPR018269">
    <property type="entry name" value="Ribosomal_uS13_CS"/>
</dbReference>
<dbReference type="NCBIfam" id="TIGR03631">
    <property type="entry name" value="uS13_bact"/>
    <property type="match status" value="1"/>
</dbReference>
<dbReference type="PANTHER" id="PTHR10871">
    <property type="entry name" value="30S RIBOSOMAL PROTEIN S13/40S RIBOSOMAL PROTEIN S18"/>
    <property type="match status" value="1"/>
</dbReference>
<dbReference type="PANTHER" id="PTHR10871:SF1">
    <property type="entry name" value="SMALL RIBOSOMAL SUBUNIT PROTEIN US13M"/>
    <property type="match status" value="1"/>
</dbReference>
<dbReference type="Pfam" id="PF00416">
    <property type="entry name" value="Ribosomal_S13"/>
    <property type="match status" value="1"/>
</dbReference>
<dbReference type="PIRSF" id="PIRSF002134">
    <property type="entry name" value="Ribosomal_S13"/>
    <property type="match status" value="1"/>
</dbReference>
<dbReference type="SUPFAM" id="SSF46946">
    <property type="entry name" value="S13-like H2TH domain"/>
    <property type="match status" value="1"/>
</dbReference>
<dbReference type="PROSITE" id="PS00646">
    <property type="entry name" value="RIBOSOMAL_S13_1"/>
    <property type="match status" value="1"/>
</dbReference>
<dbReference type="PROSITE" id="PS50159">
    <property type="entry name" value="RIBOSOMAL_S13_2"/>
    <property type="match status" value="1"/>
</dbReference>
<evidence type="ECO:0000255" key="1">
    <source>
        <dbReference type="HAMAP-Rule" id="MF_01315"/>
    </source>
</evidence>
<evidence type="ECO:0000256" key="2">
    <source>
        <dbReference type="SAM" id="MobiDB-lite"/>
    </source>
</evidence>
<evidence type="ECO:0000305" key="3"/>
<protein>
    <recommendedName>
        <fullName evidence="1">Small ribosomal subunit protein uS13</fullName>
    </recommendedName>
    <alternativeName>
        <fullName evidence="3">30S ribosomal protein S13</fullName>
    </alternativeName>
</protein>
<reference key="1">
    <citation type="journal article" date="2004" name="Nat. Genet.">
        <title>Evidence in the Legionella pneumophila genome for exploitation of host cell functions and high genome plasticity.</title>
        <authorList>
            <person name="Cazalet C."/>
            <person name="Rusniok C."/>
            <person name="Brueggemann H."/>
            <person name="Zidane N."/>
            <person name="Magnier A."/>
            <person name="Ma L."/>
            <person name="Tichit M."/>
            <person name="Jarraud S."/>
            <person name="Bouchier C."/>
            <person name="Vandenesch F."/>
            <person name="Kunst F."/>
            <person name="Etienne J."/>
            <person name="Glaser P."/>
            <person name="Buchrieser C."/>
        </authorList>
    </citation>
    <scope>NUCLEOTIDE SEQUENCE [LARGE SCALE GENOMIC DNA]</scope>
    <source>
        <strain>Paris</strain>
    </source>
</reference>
<accession>Q5X837</accession>
<comment type="function">
    <text evidence="1">Located at the top of the head of the 30S subunit, it contacts several helices of the 16S rRNA. In the 70S ribosome it contacts the 23S rRNA (bridge B1a) and protein L5 of the 50S subunit (bridge B1b), connecting the 2 subunits; these bridges are implicated in subunit movement. Contacts the tRNAs in the A and P-sites.</text>
</comment>
<comment type="subunit">
    <text evidence="1">Part of the 30S ribosomal subunit. Forms a loose heterodimer with protein S19. Forms two bridges to the 50S subunit in the 70S ribosome.</text>
</comment>
<comment type="similarity">
    <text evidence="1">Belongs to the universal ribosomal protein uS13 family.</text>
</comment>
<organism>
    <name type="scientific">Legionella pneumophila (strain Paris)</name>
    <dbReference type="NCBI Taxonomy" id="297246"/>
    <lineage>
        <taxon>Bacteria</taxon>
        <taxon>Pseudomonadati</taxon>
        <taxon>Pseudomonadota</taxon>
        <taxon>Gammaproteobacteria</taxon>
        <taxon>Legionellales</taxon>
        <taxon>Legionellaceae</taxon>
        <taxon>Legionella</taxon>
    </lineage>
</organism>
<gene>
    <name evidence="1" type="primary">rpsM</name>
    <name type="ordered locus">lpp0416</name>
</gene>
<feature type="chain" id="PRO_0000230520" description="Small ribosomal subunit protein uS13">
    <location>
        <begin position="1"/>
        <end position="118"/>
    </location>
</feature>
<feature type="region of interest" description="Disordered" evidence="2">
    <location>
        <begin position="94"/>
        <end position="118"/>
    </location>
</feature>
<keyword id="KW-0687">Ribonucleoprotein</keyword>
<keyword id="KW-0689">Ribosomal protein</keyword>
<keyword id="KW-0694">RNA-binding</keyword>
<keyword id="KW-0699">rRNA-binding</keyword>
<keyword id="KW-0820">tRNA-binding</keyword>
<name>RS13_LEGPA</name>